<sequence>MKPSDVRSKAFAMPLTSPAFPMGPYRFVDREFLIITYRTDPDRLREIVPEPLQVTEPLVHYEFIRMADSTGFGDYTESGQVIPVEYEGQPGGYTLAMYLDDHPPIAGGRELWGFPKKLASPTLHVNTDHILGTLDYGKVRVATGTMGYKHKELDIDEQTKRLAGPNFLLKIIPHVDGTARVCELVRYYMQDIKMKGAWTGPASLELAPHALAPVADLPVLEIVEARHLVADLTLGLGEVVYDYLAQ</sequence>
<proteinExistence type="inferred from homology"/>
<feature type="chain" id="PRO_1000129875" description="Acetoacetate decarboxylase">
    <location>
        <begin position="1"/>
        <end position="246"/>
    </location>
</feature>
<feature type="active site" description="Schiff-base intermediate with acetoacetate" evidence="1">
    <location>
        <position position="116"/>
    </location>
</feature>
<comment type="function">
    <text evidence="1">Catalyzes the conversion of acetoacetate to acetone and carbon dioxide.</text>
</comment>
<comment type="catalytic activity">
    <reaction evidence="1">
        <text>acetoacetate + H(+) = acetone + CO2</text>
        <dbReference type="Rhea" id="RHEA:19729"/>
        <dbReference type="ChEBI" id="CHEBI:13705"/>
        <dbReference type="ChEBI" id="CHEBI:15347"/>
        <dbReference type="ChEBI" id="CHEBI:15378"/>
        <dbReference type="ChEBI" id="CHEBI:16526"/>
        <dbReference type="EC" id="4.1.1.4"/>
    </reaction>
</comment>
<comment type="similarity">
    <text evidence="1">Belongs to the ADC family.</text>
</comment>
<evidence type="ECO:0000255" key="1">
    <source>
        <dbReference type="HAMAP-Rule" id="MF_00597"/>
    </source>
</evidence>
<dbReference type="EC" id="4.1.1.4" evidence="1"/>
<dbReference type="EMBL" id="CP000959">
    <property type="protein sequence ID" value="ACA93665.1"/>
    <property type="molecule type" value="Genomic_DNA"/>
</dbReference>
<dbReference type="RefSeq" id="WP_011548736.1">
    <property type="nucleotide sequence ID" value="NC_010515.1"/>
</dbReference>
<dbReference type="SMR" id="B1K259"/>
<dbReference type="GeneID" id="83051256"/>
<dbReference type="KEGG" id="bcm:Bcenmc03_4525"/>
<dbReference type="HOGENOM" id="CLU_077089_0_0_4"/>
<dbReference type="Proteomes" id="UP000002169">
    <property type="component" value="Chromosome 2"/>
</dbReference>
<dbReference type="GO" id="GO:0047602">
    <property type="term" value="F:acetoacetate decarboxylase activity"/>
    <property type="evidence" value="ECO:0007669"/>
    <property type="project" value="UniProtKB-UniRule"/>
</dbReference>
<dbReference type="Gene3D" id="2.40.400.10">
    <property type="entry name" value="Acetoacetate decarboxylase-like"/>
    <property type="match status" value="1"/>
</dbReference>
<dbReference type="HAMAP" id="MF_00597">
    <property type="entry name" value="ADC"/>
    <property type="match status" value="1"/>
</dbReference>
<dbReference type="InterPro" id="IPR010451">
    <property type="entry name" value="Acetoacetate_decarboxylase"/>
</dbReference>
<dbReference type="InterPro" id="IPR023653">
    <property type="entry name" value="Acetoacetate_decarboxylase_bac"/>
</dbReference>
<dbReference type="InterPro" id="IPR023375">
    <property type="entry name" value="ADC_dom_sf"/>
</dbReference>
<dbReference type="NCBIfam" id="NF002614">
    <property type="entry name" value="PRK02265.1"/>
    <property type="match status" value="1"/>
</dbReference>
<dbReference type="Pfam" id="PF06314">
    <property type="entry name" value="ADC"/>
    <property type="match status" value="1"/>
</dbReference>
<dbReference type="SUPFAM" id="SSF160104">
    <property type="entry name" value="Acetoacetate decarboxylase-like"/>
    <property type="match status" value="1"/>
</dbReference>
<name>ADC_BURO0</name>
<gene>
    <name evidence="1" type="primary">adc</name>
    <name type="ordered locus">Bcenmc03_4525</name>
</gene>
<accession>B1K259</accession>
<keyword id="KW-0210">Decarboxylase</keyword>
<keyword id="KW-0456">Lyase</keyword>
<keyword id="KW-0704">Schiff base</keyword>
<reference key="1">
    <citation type="submission" date="2008-02" db="EMBL/GenBank/DDBJ databases">
        <title>Complete sequence of chromosome 2 of Burkholderia cenocepacia MC0-3.</title>
        <authorList>
            <person name="Copeland A."/>
            <person name="Lucas S."/>
            <person name="Lapidus A."/>
            <person name="Barry K."/>
            <person name="Bruce D."/>
            <person name="Goodwin L."/>
            <person name="Glavina del Rio T."/>
            <person name="Dalin E."/>
            <person name="Tice H."/>
            <person name="Pitluck S."/>
            <person name="Chain P."/>
            <person name="Malfatti S."/>
            <person name="Shin M."/>
            <person name="Vergez L."/>
            <person name="Schmutz J."/>
            <person name="Larimer F."/>
            <person name="Land M."/>
            <person name="Hauser L."/>
            <person name="Kyrpides N."/>
            <person name="Mikhailova N."/>
            <person name="Tiedje J."/>
            <person name="Richardson P."/>
        </authorList>
    </citation>
    <scope>NUCLEOTIDE SEQUENCE [LARGE SCALE GENOMIC DNA]</scope>
    <source>
        <strain>MC0-3</strain>
    </source>
</reference>
<protein>
    <recommendedName>
        <fullName evidence="1">Acetoacetate decarboxylase</fullName>
        <shortName evidence="1">AAD</shortName>
        <shortName evidence="1">ADC</shortName>
        <ecNumber evidence="1">4.1.1.4</ecNumber>
    </recommendedName>
</protein>
<organism>
    <name type="scientific">Burkholderia orbicola (strain MC0-3)</name>
    <dbReference type="NCBI Taxonomy" id="406425"/>
    <lineage>
        <taxon>Bacteria</taxon>
        <taxon>Pseudomonadati</taxon>
        <taxon>Pseudomonadota</taxon>
        <taxon>Betaproteobacteria</taxon>
        <taxon>Burkholderiales</taxon>
        <taxon>Burkholderiaceae</taxon>
        <taxon>Burkholderia</taxon>
        <taxon>Burkholderia cepacia complex</taxon>
        <taxon>Burkholderia orbicola</taxon>
    </lineage>
</organism>